<comment type="function">
    <text evidence="3 5 6 7">V region of the variable domain of T cell receptor (TR) beta chain that participates in the antigen recognition (PubMed:24600447). Alpha-beta T cell receptors are antigen specific receptors which are essential to the immune response and are present on the cell surface of T lymphocytes. Recognize peptide-major histocompatibility (MH) (pMH) complexes that are displayed by antigen presenting cells (APC), a prerequisite for efficient T cell adaptive immunity against pathogens (PubMed:25493333). Binding of alpha-beta TR to pMH complex initiates TR-CD3 clustering on the cell surface and intracellular activation of LCK that phosphorylates the ITAM motifs of CD3G, CD3D, CD3E and CD247 enabling the recruitment of ZAP70. In turn ZAP70 phosphorylates LAT, which recruits numerous signaling molecules to form the LAT signalosome. The LAT signalosome propagates signal branching to three major signaling pathways, the calcium, the mitogen-activated protein kinase (MAPK) kinase and the nuclear factor NF-kappa-B (NF-kB) pathways, leading to the mobilization of transcription factors that are critical for gene expression and essential for T cell growth and differentiation (PubMed:23524462). The T cell repertoire is generated in the thymus, by V-(D)-J rearrangement. This repertoire is then shaped by intrathymic selection events to generate a peripheral T cell pool of self-MH restricted, non-autoaggressive T cells. Post-thymic interaction of alpha-beta TR with the pMH complexes shapes TR structural and functional avidity (PubMed:15040585).</text>
</comment>
<comment type="subunit">
    <text evidence="4">Alpha-beta TR is a heterodimer composed of an alpha and beta chain; disulfide-linked. The alpha-beta TR is associated with the transmembrane signaling CD3 coreceptor proteins to form the TR-CD3 (TcR or TCR). The assembly of alpha-beta TR heterodimers with CD3 occurs in the endoplasmic reticulum where a single alpha-beta TR heterodimer associates with one CD3D-CD3E heterodimer, one CD3G-CD3E heterodimer and one CD247 homodimer forming a stable octameric structure. CD3D-CD3E and CD3G-CD3E heterodimers preferentially associate with TR alpha and TR beta chains, respectively. The association of the CD247 homodimer is the last step of TcR assembly in the endoplasmic reticulum and is required for transport to the cell surface.</text>
</comment>
<comment type="subcellular location">
    <subcellularLocation>
        <location evidence="4">Cell membrane</location>
    </subcellularLocation>
</comment>
<comment type="polymorphism">
    <text evidence="9">There are several alleles. The sequence shown is that of IMGT allele TRBV18*01.</text>
</comment>
<feature type="signal peptide" evidence="1">
    <location>
        <begin position="1"/>
        <end position="21"/>
    </location>
</feature>
<feature type="chain" id="PRO_5008198999" description="T cell receptor beta variable 18" evidence="1">
    <location>
        <begin position="22"/>
        <end position="115"/>
    </location>
</feature>
<feature type="domain" description="Ig-like" evidence="2">
    <location>
        <begin position="22"/>
        <end position="115" status="greater than"/>
    </location>
</feature>
<feature type="disulfide bond" evidence="2">
    <location>
        <begin position="42"/>
        <end position="111"/>
    </location>
</feature>
<feature type="non-terminal residue">
    <location>
        <position position="115"/>
    </location>
</feature>
<sequence>MDTRLLCCAVICLLGAGLSNAGVMQNPRHLVRRRGQEARLRCSPMKGHSHVYWYRQLPEEGLKFMVYLQKENIIDESGMPKERFSAEFPKEGPSILRIQQVVRGDSAAYFCASSP</sequence>
<reference key="1">
    <citation type="journal article" date="2003" name="Nature">
        <title>The DNA sequence of human chromosome 7.</title>
        <authorList>
            <person name="Hillier L.W."/>
            <person name="Fulton R.S."/>
            <person name="Fulton L.A."/>
            <person name="Graves T.A."/>
            <person name="Pepin K.H."/>
            <person name="Wagner-McPherson C."/>
            <person name="Layman D."/>
            <person name="Maas J."/>
            <person name="Jaeger S."/>
            <person name="Walker R."/>
            <person name="Wylie K."/>
            <person name="Sekhon M."/>
            <person name="Becker M.C."/>
            <person name="O'Laughlin M.D."/>
            <person name="Schaller M.E."/>
            <person name="Fewell G.A."/>
            <person name="Delehaunty K.D."/>
            <person name="Miner T.L."/>
            <person name="Nash W.E."/>
            <person name="Cordes M."/>
            <person name="Du H."/>
            <person name="Sun H."/>
            <person name="Edwards J."/>
            <person name="Bradshaw-Cordum H."/>
            <person name="Ali J."/>
            <person name="Andrews S."/>
            <person name="Isak A."/>
            <person name="Vanbrunt A."/>
            <person name="Nguyen C."/>
            <person name="Du F."/>
            <person name="Lamar B."/>
            <person name="Courtney L."/>
            <person name="Kalicki J."/>
            <person name="Ozersky P."/>
            <person name="Bielicki L."/>
            <person name="Scott K."/>
            <person name="Holmes A."/>
            <person name="Harkins R."/>
            <person name="Harris A."/>
            <person name="Strong C.M."/>
            <person name="Hou S."/>
            <person name="Tomlinson C."/>
            <person name="Dauphin-Kohlberg S."/>
            <person name="Kozlowicz-Reilly A."/>
            <person name="Leonard S."/>
            <person name="Rohlfing T."/>
            <person name="Rock S.M."/>
            <person name="Tin-Wollam A.-M."/>
            <person name="Abbott A."/>
            <person name="Minx P."/>
            <person name="Maupin R."/>
            <person name="Strowmatt C."/>
            <person name="Latreille P."/>
            <person name="Miller N."/>
            <person name="Johnson D."/>
            <person name="Murray J."/>
            <person name="Woessner J.P."/>
            <person name="Wendl M.C."/>
            <person name="Yang S.-P."/>
            <person name="Schultz B.R."/>
            <person name="Wallis J.W."/>
            <person name="Spieth J."/>
            <person name="Bieri T.A."/>
            <person name="Nelson J.O."/>
            <person name="Berkowicz N."/>
            <person name="Wohldmann P.E."/>
            <person name="Cook L.L."/>
            <person name="Hickenbotham M.T."/>
            <person name="Eldred J."/>
            <person name="Williams D."/>
            <person name="Bedell J.A."/>
            <person name="Mardis E.R."/>
            <person name="Clifton S.W."/>
            <person name="Chissoe S.L."/>
            <person name="Marra M.A."/>
            <person name="Raymond C."/>
            <person name="Haugen E."/>
            <person name="Gillett W."/>
            <person name="Zhou Y."/>
            <person name="James R."/>
            <person name="Phelps K."/>
            <person name="Iadanoto S."/>
            <person name="Bubb K."/>
            <person name="Simms E."/>
            <person name="Levy R."/>
            <person name="Clendenning J."/>
            <person name="Kaul R."/>
            <person name="Kent W.J."/>
            <person name="Furey T.S."/>
            <person name="Baertsch R.A."/>
            <person name="Brent M.R."/>
            <person name="Keibler E."/>
            <person name="Flicek P."/>
            <person name="Bork P."/>
            <person name="Suyama M."/>
            <person name="Bailey J.A."/>
            <person name="Portnoy M.E."/>
            <person name="Torrents D."/>
            <person name="Chinwalla A.T."/>
            <person name="Gish W.R."/>
            <person name="Eddy S.R."/>
            <person name="McPherson J.D."/>
            <person name="Olson M.V."/>
            <person name="Eichler E.E."/>
            <person name="Green E.D."/>
            <person name="Waterston R.H."/>
            <person name="Wilson R.K."/>
        </authorList>
    </citation>
    <scope>NUCLEOTIDE SEQUENCE [LARGE SCALE GENOMIC DNA] (IMGT ALLELE TRBV18*01)</scope>
</reference>
<reference key="2">
    <citation type="book" date="2001" name="The T Cell Receptor FactsBook.">
        <title>The T Cell Receptor FactsBook.</title>
        <editorList>
            <person name="Lefranc M.P."/>
            <person name="Lefranc G."/>
        </editorList>
        <authorList>
            <person name="Lefranc M.P."/>
            <person name="Lefranc G."/>
        </authorList>
    </citation>
    <scope>NOMENCLATURE</scope>
</reference>
<reference key="3">
    <citation type="journal article" date="2004" name="Nat. Rev. Immunol.">
        <title>The many important facets of T-cell repertoire diversity.</title>
        <authorList>
            <person name="Nikolich-Zugich J."/>
            <person name="Slifka M.K."/>
            <person name="Messaoudi I."/>
        </authorList>
    </citation>
    <scope>REVIEW ON T CELL REPERTOIRE DIVERSITY</scope>
</reference>
<reference key="4">
    <citation type="journal article" date="2010" name="Cold Spring Harb. Perspect. Biol.">
        <title>Structural biology of the T-cell receptor: insights into receptor assembly, ligand recognition, and initiation of signaling.</title>
        <authorList>
            <person name="Wucherpfennig K.W."/>
            <person name="Gagnon E."/>
            <person name="Call M.J."/>
            <person name="Huseby E.S."/>
            <person name="Call M.E."/>
        </authorList>
    </citation>
    <scope>REVIEW ON T CELL RECEPTOR-CD3 COMPLEX ASSEMBLY</scope>
    <scope>SUBCELLULAR LOCATION</scope>
</reference>
<reference key="5">
    <citation type="journal article" date="2013" name="Nat. Rev. Immunol.">
        <title>T cell receptor signalling networks: branched, diversified and bounded.</title>
        <authorList>
            <person name="Brownlie R.J."/>
            <person name="Zamoyska R."/>
        </authorList>
    </citation>
    <scope>REVIEW ON T CELL RECEPTOR SIGNALING</scope>
</reference>
<reference key="6">
    <citation type="journal article" date="2014" name="Front. Immunol.">
        <title>Immunoglobulin and T Cell Receptor Genes: IMGT((R)) and the Birth and Rise of Immunoinformatics.</title>
        <authorList>
            <person name="Lefranc M.P."/>
        </authorList>
    </citation>
    <scope>NOMENCLATURE</scope>
</reference>
<reference key="7">
    <citation type="journal article" date="2015" name="Annu. Rev. Immunol.">
        <title>T cell antigen receptor recognition of antigen-presenting molecules.</title>
        <authorList>
            <person name="Rossjohn J."/>
            <person name="Gras S."/>
            <person name="Miles J.J."/>
            <person name="Turner S.J."/>
            <person name="Godfrey D.I."/>
            <person name="McCluskey J."/>
        </authorList>
    </citation>
    <scope>REVIEW ON FUNCTION</scope>
</reference>
<protein>
    <recommendedName>
        <fullName evidence="8">T cell receptor beta variable 18</fullName>
    </recommendedName>
</protein>
<name>TVB18_HUMAN</name>
<accession>A0A087X0M5</accession>
<evidence type="ECO:0000255" key="1"/>
<evidence type="ECO:0000255" key="2">
    <source>
        <dbReference type="PROSITE-ProRule" id="PRU00114"/>
    </source>
</evidence>
<evidence type="ECO:0000303" key="3">
    <source>
    </source>
</evidence>
<evidence type="ECO:0000303" key="4">
    <source>
    </source>
</evidence>
<evidence type="ECO:0000303" key="5">
    <source>
    </source>
</evidence>
<evidence type="ECO:0000303" key="6">
    <source>
    </source>
</evidence>
<evidence type="ECO:0000303" key="7">
    <source>
    </source>
</evidence>
<evidence type="ECO:0000303" key="8">
    <source ref="2"/>
</evidence>
<evidence type="ECO:0000305" key="9"/>
<proteinExistence type="evidence at protein level"/>
<organism>
    <name type="scientific">Homo sapiens</name>
    <name type="common">Human</name>
    <dbReference type="NCBI Taxonomy" id="9606"/>
    <lineage>
        <taxon>Eukaryota</taxon>
        <taxon>Metazoa</taxon>
        <taxon>Chordata</taxon>
        <taxon>Craniata</taxon>
        <taxon>Vertebrata</taxon>
        <taxon>Euteleostomi</taxon>
        <taxon>Mammalia</taxon>
        <taxon>Eutheria</taxon>
        <taxon>Euarchontoglires</taxon>
        <taxon>Primates</taxon>
        <taxon>Haplorrhini</taxon>
        <taxon>Catarrhini</taxon>
        <taxon>Hominidae</taxon>
        <taxon>Homo</taxon>
    </lineage>
</organism>
<dbReference type="EMBL" id="AC244472">
    <property type="status" value="NOT_ANNOTATED_CDS"/>
    <property type="molecule type" value="Genomic_DNA"/>
</dbReference>
<dbReference type="SMR" id="A0A087X0M5"/>
<dbReference type="FunCoup" id="A0A087X0M5">
    <property type="interactions" value="377"/>
</dbReference>
<dbReference type="IMGT_GENE-DB" id="TRBV18"/>
<dbReference type="BioMuta" id="ENSG00000276557"/>
<dbReference type="jPOST" id="A0A087X0M5"/>
<dbReference type="MassIVE" id="A0A087X0M5"/>
<dbReference type="Ensembl" id="ENST00000611520.1">
    <property type="protein sequence ID" value="ENSP00000483504.1"/>
    <property type="gene ID" value="ENSG00000276557.1"/>
</dbReference>
<dbReference type="UCSC" id="uc033amm.2">
    <property type="organism name" value="human"/>
</dbReference>
<dbReference type="AGR" id="HGNC:12193"/>
<dbReference type="GeneCards" id="TRBV18"/>
<dbReference type="HGNC" id="HGNC:12193">
    <property type="gene designation" value="TRBV18"/>
</dbReference>
<dbReference type="HPA" id="ENSG00000276557">
    <property type="expression patterns" value="Tissue enriched (lymphoid)"/>
</dbReference>
<dbReference type="neXtProt" id="NX_A0A087X0M5"/>
<dbReference type="OpenTargets" id="ENSG00000276557"/>
<dbReference type="VEuPathDB" id="HostDB:ENSG00000276557"/>
<dbReference type="GeneTree" id="ENSGT00940000154460"/>
<dbReference type="HOGENOM" id="CLU_077975_9_4_1"/>
<dbReference type="InParanoid" id="A0A087X0M5"/>
<dbReference type="OMA" id="PPDLPWK"/>
<dbReference type="OrthoDB" id="9631130at2759"/>
<dbReference type="PAN-GO" id="A0A087X0M5">
    <property type="GO annotations" value="2 GO annotations based on evolutionary models"/>
</dbReference>
<dbReference type="ChiTaRS" id="TRBV18">
    <property type="organism name" value="human"/>
</dbReference>
<dbReference type="Pharos" id="A0A087X0M5">
    <property type="development level" value="Tdark"/>
</dbReference>
<dbReference type="PRO" id="PR:A0A087X0M5"/>
<dbReference type="Proteomes" id="UP000005640">
    <property type="component" value="Chromosome 7"/>
</dbReference>
<dbReference type="RNAct" id="A0A087X0M5">
    <property type="molecule type" value="protein"/>
</dbReference>
<dbReference type="Bgee" id="ENSG00000276557">
    <property type="expression patterns" value="Expressed in lymph node and 78 other cell types or tissues"/>
</dbReference>
<dbReference type="GO" id="GO:0005886">
    <property type="term" value="C:plasma membrane"/>
    <property type="evidence" value="ECO:0000318"/>
    <property type="project" value="GO_Central"/>
</dbReference>
<dbReference type="GO" id="GO:0042101">
    <property type="term" value="C:T cell receptor complex"/>
    <property type="evidence" value="ECO:0007669"/>
    <property type="project" value="UniProtKB-KW"/>
</dbReference>
<dbReference type="GO" id="GO:0002250">
    <property type="term" value="P:adaptive immune response"/>
    <property type="evidence" value="ECO:0007669"/>
    <property type="project" value="UniProtKB-KW"/>
</dbReference>
<dbReference type="GO" id="GO:0007166">
    <property type="term" value="P:cell surface receptor signaling pathway"/>
    <property type="evidence" value="ECO:0000318"/>
    <property type="project" value="GO_Central"/>
</dbReference>
<dbReference type="Gene3D" id="2.60.40.10">
    <property type="entry name" value="Immunoglobulins"/>
    <property type="match status" value="1"/>
</dbReference>
<dbReference type="InterPro" id="IPR007110">
    <property type="entry name" value="Ig-like_dom"/>
</dbReference>
<dbReference type="InterPro" id="IPR036179">
    <property type="entry name" value="Ig-like_dom_sf"/>
</dbReference>
<dbReference type="InterPro" id="IPR013783">
    <property type="entry name" value="Ig-like_fold"/>
</dbReference>
<dbReference type="InterPro" id="IPR013106">
    <property type="entry name" value="Ig_V-set"/>
</dbReference>
<dbReference type="InterPro" id="IPR050413">
    <property type="entry name" value="TCR_beta_variable"/>
</dbReference>
<dbReference type="PANTHER" id="PTHR23268:SF88">
    <property type="entry name" value="T CELL RECEPTOR BETA VARIABLE 18"/>
    <property type="match status" value="1"/>
</dbReference>
<dbReference type="PANTHER" id="PTHR23268">
    <property type="entry name" value="T-CELL RECEPTOR BETA CHAIN"/>
    <property type="match status" value="1"/>
</dbReference>
<dbReference type="Pfam" id="PF07686">
    <property type="entry name" value="V-set"/>
    <property type="match status" value="1"/>
</dbReference>
<dbReference type="SUPFAM" id="SSF48726">
    <property type="entry name" value="Immunoglobulin"/>
    <property type="match status" value="1"/>
</dbReference>
<dbReference type="PROSITE" id="PS50835">
    <property type="entry name" value="IG_LIKE"/>
    <property type="match status" value="1"/>
</dbReference>
<keyword id="KW-1064">Adaptive immunity</keyword>
<keyword id="KW-1003">Cell membrane</keyword>
<keyword id="KW-1015">Disulfide bond</keyword>
<keyword id="KW-0391">Immunity</keyword>
<keyword id="KW-0393">Immunoglobulin domain</keyword>
<keyword id="KW-0472">Membrane</keyword>
<keyword id="KW-1267">Proteomics identification</keyword>
<keyword id="KW-0675">Receptor</keyword>
<keyword id="KW-1185">Reference proteome</keyword>
<keyword id="KW-0732">Signal</keyword>
<keyword id="KW-1279">T cell receptor</keyword>
<gene>
    <name evidence="8" type="primary">TRBV18</name>
</gene>